<comment type="function">
    <text evidence="4">Functions as a receptor for the Fc fragment of IgA and IgM. Binds IgA and IgM with high affinity and mediates their endocytosis. May function in the immune response to microbes mediated by IgA and IgM.</text>
</comment>
<comment type="subunit">
    <text evidence="4">Interacts with IGHM; this interaction facilitates the endocytosis of IgM-coated microbes and IgM-antigen immune complexes.</text>
</comment>
<comment type="subcellular location">
    <subcellularLocation>
        <location evidence="4">Cell membrane</location>
        <topology evidence="2">Single-pass type I membrane protein</topology>
    </subcellularLocation>
</comment>
<comment type="alternative products">
    <event type="alternative splicing"/>
    <isoform>
        <id>Q2TB54-1</id>
        <name>1</name>
        <sequence type="displayed"/>
    </isoform>
    <isoform>
        <id>Q2TB54-2</id>
        <name>2</name>
        <sequence type="described" ref="VSP_033233"/>
    </isoform>
</comment>
<comment type="tissue specificity">
    <text evidence="4 5">Expressed in several tissues including thymus, spleen, liver, kidney, small and large intestine, testis and placenta. Expressed by oligodendrocytes, B-cells and macrophages but not granulocytes, T-cells or NK cells (at protein level).</text>
</comment>
<comment type="PTM">
    <text evidence="1">N-glycosylated.</text>
</comment>
<accession>Q2TB54</accession>
<accession>Q2TB55</accession>
<accession>Q920L8</accession>
<accession>Q9EQT7</accession>
<keyword id="KW-1064">Adaptive immunity</keyword>
<keyword id="KW-0025">Alternative splicing</keyword>
<keyword id="KW-1003">Cell membrane</keyword>
<keyword id="KW-1015">Disulfide bond</keyword>
<keyword id="KW-0325">Glycoprotein</keyword>
<keyword id="KW-0391">Immunity</keyword>
<keyword id="KW-0393">Immunoglobulin domain</keyword>
<keyword id="KW-0472">Membrane</keyword>
<keyword id="KW-0675">Receptor</keyword>
<keyword id="KW-1185">Reference proteome</keyword>
<keyword id="KW-0732">Signal</keyword>
<keyword id="KW-0812">Transmembrane</keyword>
<keyword id="KW-1133">Transmembrane helix</keyword>
<proteinExistence type="evidence at protein level"/>
<dbReference type="EMBL" id="AB048834">
    <property type="protein sequence ID" value="BAB17312.1"/>
    <property type="molecule type" value="mRNA"/>
</dbReference>
<dbReference type="EMBL" id="BC110549">
    <property type="protein sequence ID" value="AAI10550.1"/>
    <property type="molecule type" value="mRNA"/>
</dbReference>
<dbReference type="EMBL" id="BC110550">
    <property type="protein sequence ID" value="AAI10551.1"/>
    <property type="molecule type" value="mRNA"/>
</dbReference>
<dbReference type="EMBL" id="AB071978">
    <property type="protein sequence ID" value="BAB71750.1"/>
    <property type="molecule type" value="Genomic_DNA"/>
</dbReference>
<dbReference type="CCDS" id="CCDS15259.1">
    <molecule id="Q2TB54-1"/>
</dbReference>
<dbReference type="CCDS" id="CCDS48353.1">
    <molecule id="Q2TB54-2"/>
</dbReference>
<dbReference type="RefSeq" id="NP_001164103.1">
    <molecule id="Q2TB54-2"/>
    <property type="nucleotide sequence ID" value="NM_001170632.1"/>
</dbReference>
<dbReference type="RefSeq" id="NP_659209.2">
    <molecule id="Q2TB54-1"/>
    <property type="nucleotide sequence ID" value="NM_144960.2"/>
</dbReference>
<dbReference type="RefSeq" id="XP_006529850.1">
    <molecule id="Q2TB54-1"/>
    <property type="nucleotide sequence ID" value="XM_006529787.5"/>
</dbReference>
<dbReference type="RefSeq" id="XP_017177414.1">
    <molecule id="Q2TB54-1"/>
    <property type="nucleotide sequence ID" value="XM_017321925.3"/>
</dbReference>
<dbReference type="SMR" id="Q2TB54"/>
<dbReference type="FunCoup" id="Q2TB54">
    <property type="interactions" value="755"/>
</dbReference>
<dbReference type="STRING" id="10090.ENSMUSP00000108096"/>
<dbReference type="GlyCosmos" id="Q2TB54">
    <property type="glycosylation" value="1 site, No reported glycans"/>
</dbReference>
<dbReference type="GlyGen" id="Q2TB54">
    <property type="glycosylation" value="4 sites"/>
</dbReference>
<dbReference type="iPTMnet" id="Q2TB54"/>
<dbReference type="PhosphoSitePlus" id="Q2TB54"/>
<dbReference type="PaxDb" id="10090-ENSMUSP00000108096"/>
<dbReference type="ProteomicsDB" id="267362">
    <molecule id="Q2TB54-1"/>
</dbReference>
<dbReference type="ProteomicsDB" id="267363">
    <molecule id="Q2TB54-2"/>
</dbReference>
<dbReference type="Antibodypedia" id="57057">
    <property type="antibodies" value="51 antibodies from 17 providers"/>
</dbReference>
<dbReference type="DNASU" id="64435"/>
<dbReference type="Ensembl" id="ENSMUST00000027670.4">
    <molecule id="Q2TB54-1"/>
    <property type="protein sequence ID" value="ENSMUSP00000027670.4"/>
    <property type="gene ID" value="ENSMUSG00000026415.12"/>
</dbReference>
<dbReference type="Ensembl" id="ENSMUST00000112477.9">
    <molecule id="Q2TB54-2"/>
    <property type="protein sequence ID" value="ENSMUSP00000108096.3"/>
    <property type="gene ID" value="ENSMUSG00000026415.12"/>
</dbReference>
<dbReference type="GeneID" id="64435"/>
<dbReference type="KEGG" id="mmu:64435"/>
<dbReference type="UCSC" id="uc007cmk.1">
    <molecule id="Q2TB54-1"/>
    <property type="organism name" value="mouse"/>
</dbReference>
<dbReference type="UCSC" id="uc007cml.1">
    <molecule id="Q2TB54-2"/>
    <property type="organism name" value="mouse"/>
</dbReference>
<dbReference type="AGR" id="MGI:1927803"/>
<dbReference type="CTD" id="83953"/>
<dbReference type="MGI" id="MGI:1927803">
    <property type="gene designation" value="Fcamr"/>
</dbReference>
<dbReference type="VEuPathDB" id="HostDB:ENSMUSG00000026415"/>
<dbReference type="eggNOG" id="ENOG502SNZE">
    <property type="taxonomic scope" value="Eukaryota"/>
</dbReference>
<dbReference type="GeneTree" id="ENSGT00950000182977"/>
<dbReference type="HOGENOM" id="CLU_041432_0_0_1"/>
<dbReference type="InParanoid" id="Q2TB54"/>
<dbReference type="OMA" id="QCHYAPL"/>
<dbReference type="OrthoDB" id="64593at9989"/>
<dbReference type="PhylomeDB" id="Q2TB54"/>
<dbReference type="TreeFam" id="TF334441"/>
<dbReference type="Reactome" id="R-MMU-202733">
    <property type="pathway name" value="Cell surface interactions at the vascular wall"/>
</dbReference>
<dbReference type="BioGRID-ORCS" id="64435">
    <property type="hits" value="2 hits in 77 CRISPR screens"/>
</dbReference>
<dbReference type="PRO" id="PR:Q2TB54"/>
<dbReference type="Proteomes" id="UP000000589">
    <property type="component" value="Chromosome 1"/>
</dbReference>
<dbReference type="RNAct" id="Q2TB54">
    <property type="molecule type" value="protein"/>
</dbReference>
<dbReference type="Bgee" id="ENSMUSG00000026415">
    <property type="expression patterns" value="Expressed in right kidney and 30 other cell types or tissues"/>
</dbReference>
<dbReference type="GO" id="GO:0005886">
    <property type="term" value="C:plasma membrane"/>
    <property type="evidence" value="ECO:0007669"/>
    <property type="project" value="UniProtKB-SubCell"/>
</dbReference>
<dbReference type="GO" id="GO:0019862">
    <property type="term" value="F:IgA binding"/>
    <property type="evidence" value="ECO:0000314"/>
    <property type="project" value="MGI"/>
</dbReference>
<dbReference type="GO" id="GO:0001791">
    <property type="term" value="F:IgM binding"/>
    <property type="evidence" value="ECO:0000314"/>
    <property type="project" value="MGI"/>
</dbReference>
<dbReference type="GO" id="GO:0004888">
    <property type="term" value="F:transmembrane signaling receptor activity"/>
    <property type="evidence" value="ECO:0000314"/>
    <property type="project" value="MGI"/>
</dbReference>
<dbReference type="GO" id="GO:0002250">
    <property type="term" value="P:adaptive immune response"/>
    <property type="evidence" value="ECO:0007669"/>
    <property type="project" value="UniProtKB-KW"/>
</dbReference>
<dbReference type="GO" id="GO:0006955">
    <property type="term" value="P:immune response"/>
    <property type="evidence" value="ECO:0000304"/>
    <property type="project" value="MGI"/>
</dbReference>
<dbReference type="CDD" id="cd05716">
    <property type="entry name" value="IgV_pIgR_like"/>
    <property type="match status" value="1"/>
</dbReference>
<dbReference type="Gene3D" id="2.60.40.10">
    <property type="entry name" value="Immunoglobulins"/>
    <property type="match status" value="1"/>
</dbReference>
<dbReference type="InterPro" id="IPR050671">
    <property type="entry name" value="CD300_family_receptors"/>
</dbReference>
<dbReference type="InterPro" id="IPR036179">
    <property type="entry name" value="Ig-like_dom_sf"/>
</dbReference>
<dbReference type="InterPro" id="IPR013783">
    <property type="entry name" value="Ig-like_fold"/>
</dbReference>
<dbReference type="InterPro" id="IPR003599">
    <property type="entry name" value="Ig_sub"/>
</dbReference>
<dbReference type="InterPro" id="IPR013106">
    <property type="entry name" value="Ig_V-set"/>
</dbReference>
<dbReference type="PANTHER" id="PTHR11860:SF49">
    <property type="entry name" value="HIGH AFFINITY IMMUNOGLOBULIN ALPHA AND IMMUNOGLOBULIN MU FC RECEPTOR"/>
    <property type="match status" value="1"/>
</dbReference>
<dbReference type="PANTHER" id="PTHR11860">
    <property type="entry name" value="POLYMERIC-IMMUNOGLOBULIN RECEPTOR"/>
    <property type="match status" value="1"/>
</dbReference>
<dbReference type="Pfam" id="PF07686">
    <property type="entry name" value="V-set"/>
    <property type="match status" value="1"/>
</dbReference>
<dbReference type="SMART" id="SM00409">
    <property type="entry name" value="IG"/>
    <property type="match status" value="1"/>
</dbReference>
<dbReference type="SUPFAM" id="SSF48726">
    <property type="entry name" value="Immunoglobulin"/>
    <property type="match status" value="1"/>
</dbReference>
<evidence type="ECO:0000250" key="1"/>
<evidence type="ECO:0000255" key="2"/>
<evidence type="ECO:0000256" key="3">
    <source>
        <dbReference type="SAM" id="MobiDB-lite"/>
    </source>
</evidence>
<evidence type="ECO:0000269" key="4">
    <source>
    </source>
</evidence>
<evidence type="ECO:0000269" key="5">
    <source>
    </source>
</evidence>
<evidence type="ECO:0000303" key="6">
    <source>
    </source>
</evidence>
<evidence type="ECO:0000305" key="7"/>
<protein>
    <recommendedName>
        <fullName>High affinity immunoglobulin alpha and immunoglobulin mu Fc receptor</fullName>
    </recommendedName>
    <alternativeName>
        <fullName>Fc alpha/mu receptor</fullName>
        <shortName>mFcamR</shortName>
    </alternativeName>
    <cdAntigenName>CD351</cdAntigenName>
</protein>
<gene>
    <name type="primary">Fcamr</name>
</gene>
<reference key="1">
    <citation type="journal article" date="2000" name="Nat. Immunol.">
        <title>Fc alpha/mu receptor mediates endocytosis of IgM-coated microbes.</title>
        <authorList>
            <person name="Shibuya A."/>
            <person name="Sakamoto N."/>
            <person name="Shimizu Y."/>
            <person name="Shibuya K."/>
            <person name="Osawa M."/>
            <person name="Hiroyama T."/>
            <person name="Eyre H.J."/>
            <person name="Sutherland G.R."/>
            <person name="Endo Y."/>
            <person name="Fujita T."/>
            <person name="Miyabayashi T."/>
            <person name="Sakano S."/>
            <person name="Tsuji T."/>
            <person name="Nakayama E."/>
            <person name="Phillips J.H."/>
            <person name="Lanier L.L."/>
            <person name="Nakauchi H."/>
        </authorList>
    </citation>
    <scope>NUCLEOTIDE SEQUENCE [MRNA] (ISOFORM 1)</scope>
    <scope>FUNCTION</scope>
    <scope>SUBCELLULAR LOCATION</scope>
    <scope>INTERACTION WITH IGHM</scope>
    <scope>TISSUE SPECIFICITY</scope>
    <scope>MUTAGENESIS OF LEU-519 AND LEU-520</scope>
    <source>
        <tissue>T-cell</tissue>
    </source>
</reference>
<reference key="2">
    <citation type="journal article" date="2004" name="Genome Res.">
        <title>The status, quality, and expansion of the NIH full-length cDNA project: the Mammalian Gene Collection (MGC).</title>
        <authorList>
            <consortium name="The MGC Project Team"/>
        </authorList>
    </citation>
    <scope>NUCLEOTIDE SEQUENCE [LARGE SCALE MRNA] (ISOFORMS 1 AND 2)</scope>
</reference>
<reference key="3">
    <citation type="journal article" date="2001" name="Immunogenetics">
        <title>Fc(alpha)/mu receptor is a single gene-family member closely related to polymeric immunoglobulin receptor encoded on Chromosome 1.</title>
        <authorList>
            <person name="Shimizu Y."/>
            <person name="Honda S."/>
            <person name="Yotsumoto K."/>
            <person name="Tahara-Hanaoka S."/>
            <person name="Eyre H.J."/>
            <person name="Sutherland G.R."/>
            <person name="Endo Y."/>
            <person name="Shibuya K."/>
            <person name="Koyama A."/>
            <person name="Nakauchi H."/>
            <person name="Shibuya A."/>
        </authorList>
    </citation>
    <scope>NUCLEOTIDE SEQUENCE [GENOMIC DNA] OF 81-535 (ISOFORM 1)</scope>
</reference>
<reference key="4">
    <citation type="journal article" date="2003" name="Neurosci. Lett.">
        <title>Expression of Fc receptor for immunoglobulin M in oligodendrocytes and myelin of mouse central nervous system.</title>
        <authorList>
            <person name="Nakahara J."/>
            <person name="Seiwa C."/>
            <person name="Shibuya A."/>
            <person name="Aiso S."/>
            <person name="Asou H."/>
        </authorList>
    </citation>
    <scope>TISSUE SPECIFICITY</scope>
</reference>
<reference key="5">
    <citation type="journal article" date="2006" name="Biochem. Biophys. Res. Commun.">
        <title>Molecular characteristics of IgA and IgM Fc binding to the Fcalpha/muR.</title>
        <authorList>
            <person name="Cho Y."/>
            <person name="Usui K."/>
            <person name="Honda S."/>
            <person name="Tahara-Hanaoka S."/>
            <person name="Shibuya K."/>
            <person name="Shibuya A."/>
        </authorList>
    </citation>
    <scope>CHARACTERIZATION</scope>
</reference>
<organism>
    <name type="scientific">Mus musculus</name>
    <name type="common">Mouse</name>
    <dbReference type="NCBI Taxonomy" id="10090"/>
    <lineage>
        <taxon>Eukaryota</taxon>
        <taxon>Metazoa</taxon>
        <taxon>Chordata</taxon>
        <taxon>Craniata</taxon>
        <taxon>Vertebrata</taxon>
        <taxon>Euteleostomi</taxon>
        <taxon>Mammalia</taxon>
        <taxon>Eutheria</taxon>
        <taxon>Euarchontoglires</taxon>
        <taxon>Glires</taxon>
        <taxon>Rodentia</taxon>
        <taxon>Myomorpha</taxon>
        <taxon>Muroidea</taxon>
        <taxon>Muridae</taxon>
        <taxon>Murinae</taxon>
        <taxon>Mus</taxon>
        <taxon>Mus</taxon>
    </lineage>
</organism>
<sequence>MDQGAPAKPSEQKVPSLRTRWEILLLTLCLLHGSSMTPPHRRSHSRWLQAGSPQFRTHLYNVEAHTAPTPLCCWKNSLSGTNALRGPRLVTGNTGGAVTIHCHYAPSSVNRHQRKYWCRLGSPLWICHTVVSTNQYTHPDYRGRAALTDIPQSGLFVVRLLRLSLGDVGLYRCGIGDRNDMLFFSVNLTVSAGPSNTTYAAAPASGEPTTASPGAASSAGNGWTSGITQILEGSGSEWDRTVPTTGTSKTTSSANGRQTLRTARTMVPGTGSREEGSIRAAVPTPEGPSPKSRSMSSTTQGVWLWSTRNSVTPSVTTSEGRRQGTTPETDGPRDETDVRVSPEAPRKTTGTTRPSALISEHVTWETLQDKTEVSKQQMLHSLEELSPAPSAQTLNATCLEVASEEGRSIDGSLENTTEESSPPTPSQLSVAGPVWVSVKGPSMKSALMEGESHTRILTPVSTVLALLLIAALILLKRSLGRQRTSQKKERVPRITLIQMTHFLPDKLPDEGKNFQQSNLLPPQASLTVLENDPRP</sequence>
<name>FCAMR_MOUSE</name>
<feature type="signal peptide" evidence="2">
    <location>
        <begin position="1"/>
        <end position="35"/>
    </location>
</feature>
<feature type="chain" id="PRO_0000331484" description="High affinity immunoglobulin alpha and immunoglobulin mu Fc receptor">
    <location>
        <begin position="36"/>
        <end position="535"/>
    </location>
</feature>
<feature type="topological domain" description="Extracellular" evidence="2">
    <location>
        <begin position="36"/>
        <end position="455"/>
    </location>
</feature>
<feature type="transmembrane region" description="Helical" evidence="2">
    <location>
        <begin position="456"/>
        <end position="476"/>
    </location>
</feature>
<feature type="topological domain" description="Cytoplasmic" evidence="2">
    <location>
        <begin position="477"/>
        <end position="535"/>
    </location>
</feature>
<feature type="domain" description="Ig-like V-type">
    <location>
        <begin position="95"/>
        <end position="189"/>
    </location>
</feature>
<feature type="region of interest" description="Mediates immunoglobulin Fc fragment-binding">
    <location>
        <begin position="95"/>
        <end position="117"/>
    </location>
</feature>
<feature type="region of interest" description="Disordered" evidence="3">
    <location>
        <begin position="201"/>
        <end position="360"/>
    </location>
</feature>
<feature type="region of interest" description="Disordered" evidence="3">
    <location>
        <begin position="405"/>
        <end position="430"/>
    </location>
</feature>
<feature type="region of interest" description="Disordered" evidence="3">
    <location>
        <begin position="507"/>
        <end position="535"/>
    </location>
</feature>
<feature type="compositionally biased region" description="Low complexity" evidence="3">
    <location>
        <begin position="208"/>
        <end position="220"/>
    </location>
</feature>
<feature type="compositionally biased region" description="Low complexity" evidence="3">
    <location>
        <begin position="241"/>
        <end position="253"/>
    </location>
</feature>
<feature type="compositionally biased region" description="Polar residues" evidence="3">
    <location>
        <begin position="291"/>
        <end position="328"/>
    </location>
</feature>
<feature type="compositionally biased region" description="Basic and acidic residues" evidence="3">
    <location>
        <begin position="330"/>
        <end position="346"/>
    </location>
</feature>
<feature type="compositionally biased region" description="Polar residues" evidence="3">
    <location>
        <begin position="413"/>
        <end position="429"/>
    </location>
</feature>
<feature type="compositionally biased region" description="Polar residues" evidence="3">
    <location>
        <begin position="513"/>
        <end position="528"/>
    </location>
</feature>
<feature type="glycosylation site" description="N-linked (GlcNAc...) asparagine" evidence="2">
    <location>
        <position position="187"/>
    </location>
</feature>
<feature type="disulfide bond" evidence="1">
    <location>
        <begin position="102"/>
        <end position="173"/>
    </location>
</feature>
<feature type="splice variant" id="VSP_033233" description="In isoform 2." evidence="6">
    <original>K</original>
    <variation>KHLTCQDTQFPGPAFRVELPSYWSKLRMHSQSAEPWTPDHSLQLLTSLPLASCLWLQ</variation>
    <location>
        <position position="13"/>
    </location>
</feature>
<feature type="mutagenesis site" description="Prevents receptor internalization." evidence="4">
    <original>L</original>
    <variation>A</variation>
    <location>
        <position position="519"/>
    </location>
</feature>
<feature type="mutagenesis site" description="Prevents receptor internalization." evidence="4">
    <original>L</original>
    <variation>A</variation>
    <location>
        <position position="520"/>
    </location>
</feature>
<feature type="sequence conflict" description="In Ref. 1; BAB17312 and 2; AAI10550." evidence="7" ref="1 2">
    <original>R</original>
    <variation>G</variation>
    <location>
        <position position="42"/>
    </location>
</feature>
<feature type="sequence conflict" description="In Ref. 1; BAB17312 and 2; AAI10550." evidence="7" ref="1 2">
    <original>N</original>
    <variation>T</variation>
    <location>
        <position position="61"/>
    </location>
</feature>
<feature type="sequence conflict" description="In Ref. 1; BAB17312, 2; AAI10550 and 3; BAB71750." evidence="7" ref="1 2 3">
    <original>I</original>
    <variation>V</variation>
    <location>
        <position position="150"/>
    </location>
</feature>
<feature type="sequence conflict" description="In Ref. 1; BAB17312, 2; AAI10550 and 3; BAB71750." evidence="7" ref="1 2 3">
    <original>G</original>
    <variation>S</variation>
    <location>
        <position position="206"/>
    </location>
</feature>
<feature type="sequence conflict" description="In Ref. 1; BAB17312, 2; AAI10550 and 3; BAB71750." evidence="7" ref="1 2 3">
    <original>I</original>
    <variation>V</variation>
    <location>
        <position position="227"/>
    </location>
</feature>
<feature type="sequence conflict" description="In Ref. 1; BAB17312, 2; AAI10550 and 3; BAB71750." evidence="7" ref="1 2 3">
    <original>V</original>
    <variation>A</variation>
    <location>
        <position position="242"/>
    </location>
</feature>
<feature type="sequence conflict" description="In Ref. 1; BAB17312, 2; AAI10550 and 3; BAB71750." evidence="7" ref="1 2 3">
    <original>M</original>
    <variation>V</variation>
    <location>
        <position position="266"/>
    </location>
</feature>
<feature type="sequence conflict" description="In Ref. 1; BAB17312, 2; AAI10550 and 3; BAB71750." evidence="7" ref="1 2 3">
    <original>P</original>
    <variation>L</variation>
    <location>
        <position position="268"/>
    </location>
</feature>
<feature type="sequence conflict" description="In Ref. 1; BAB17312 and 3; BAB71750." evidence="7" ref="1 3">
    <original>S</original>
    <variation>N</variation>
    <location>
        <position position="306"/>
    </location>
</feature>
<feature type="sequence conflict" description="In Ref. 2; AAI10551." evidence="7" ref="2">
    <original>K</original>
    <variation>I</variation>
    <location>
        <position position="487"/>
    </location>
</feature>
<feature type="sequence conflict" description="In Ref. 1; BAB17312, 2; AAI10550 and 3; BAB71750." evidence="7" ref="1 2 3">
    <original>N</original>
    <variation>D</variation>
    <location>
        <position position="518"/>
    </location>
</feature>